<comment type="function">
    <text evidence="2 4">Its primary physiological function is unclear. Has cytoprotective activity against internal or environmental stresses. May play a role in neuronal development and synaptic plasticity. May be required for neuronal myelin sheath maintenance. May play a role in iron uptake and iron homeostasis. Soluble oligomers are toxic to cultured neuroblastoma cells and induce apoptosis (in vitro). Association with GPC1 (via its heparan sulfate chains) targets PRNP to lipid rafts. Also provides Cu(2+) or Zn(2+) for the ascorbate-mediated GPC1 deaminase degradation of its heparan sulfate side chains (By similarity).</text>
</comment>
<comment type="subunit">
    <text evidence="2 4">Monomer and homodimer. Has a tendency to aggregate into amyloid fibrils containing a cross-beta spine, formed by a steric zipper of superposed beta-strands. Soluble oligomers may represent an intermediate stage on the path to fibril formation. Copper binding may promote oligomerization. Interacts with GRB2, APP, ERI3/PRNPIP and SYN1. Mislocalized cytosolically exposed PrP interacts with MGRN1; this interaction alters MGRN1 subcellular location and causes lysosomal enlargement. Interacts with KIAA1191.</text>
</comment>
<comment type="subcellular location">
    <subcellularLocation>
        <location evidence="2">Cell membrane</location>
        <topology evidence="2">Lipid-anchor</topology>
        <topology evidence="2">GPI-anchor</topology>
    </subcellularLocation>
    <subcellularLocation>
        <location evidence="4">Golgi apparatus</location>
    </subcellularLocation>
    <text evidence="2">Targeted to lipid rafts via association with the heparan sulfate chains of GPC1. Colocates, in the presence of Cu(2+), to vesicles in para- and perinuclear regions, where both proteins undergo internalization. Heparin displaces PRNP from lipid rafts and promotes endocytosis.</text>
</comment>
<comment type="domain">
    <text evidence="2">The normal, monomeric form has a mainly alpha-helical structure. The disease-associated, protease-resistant form forms amyloid fibrils containing a cross-beta spine, formed by a steric zipper of superposed beta-strands. Disease mutations may favor intermolecular contacts via short beta strands, and may thereby trigger oligomerization.</text>
</comment>
<comment type="domain">
    <text evidence="2">Contains an N-terminal region composed of octamer repeats. At low copper concentrations, the sidechains of His residues from three or four repeats contribute to the binding of a single copper ion. Alternatively, a copper ion can be bound by interaction with the sidechain and backbone amide nitrogen of a single His residue. The observed copper binding stoichiometry suggests that two repeat regions cooperate to stabilize the binding of a single copper ion. At higher copper concentrations, each octamer can bind one copper ion by interactions with the His sidechain and Gly backbone atoms. A mixture of binding types may occur, especially in the case of octamer repeat expansion. Copper binding may stabilize the conformation of this region and may promote oligomerization.</text>
</comment>
<comment type="disease">
    <text evidence="7">Found in high quantity in the brain of humans and animals infected with degenerative neurological diseases such as kuru, Creutzfeldt-Jakob disease (CJD), Gerstmann-Straussler syndrome (GSS), scrapie, bovine spongiform encephalopathy (BSE), transmissible mink encephalopathy (TME), etc.</text>
</comment>
<comment type="similarity">
    <text evidence="7">Belongs to the prion family.</text>
</comment>
<keyword id="KW-0034">Amyloid</keyword>
<keyword id="KW-1003">Cell membrane</keyword>
<keyword id="KW-0186">Copper</keyword>
<keyword id="KW-1015">Disulfide bond</keyword>
<keyword id="KW-0325">Glycoprotein</keyword>
<keyword id="KW-0333">Golgi apparatus</keyword>
<keyword id="KW-0336">GPI-anchor</keyword>
<keyword id="KW-0449">Lipoprotein</keyword>
<keyword id="KW-0472">Membrane</keyword>
<keyword id="KW-0479">Metal-binding</keyword>
<keyword id="KW-0640">Prion</keyword>
<keyword id="KW-1185">Reference proteome</keyword>
<keyword id="KW-0677">Repeat</keyword>
<keyword id="KW-0732">Signal</keyword>
<keyword id="KW-0862">Zinc</keyword>
<name>PRIO_AILME</name>
<organism>
    <name type="scientific">Ailuropoda melanoleuca</name>
    <name type="common">Giant panda</name>
    <dbReference type="NCBI Taxonomy" id="9646"/>
    <lineage>
        <taxon>Eukaryota</taxon>
        <taxon>Metazoa</taxon>
        <taxon>Chordata</taxon>
        <taxon>Craniata</taxon>
        <taxon>Vertebrata</taxon>
        <taxon>Euteleostomi</taxon>
        <taxon>Mammalia</taxon>
        <taxon>Eutheria</taxon>
        <taxon>Laurasiatheria</taxon>
        <taxon>Carnivora</taxon>
        <taxon>Caniformia</taxon>
        <taxon>Ursidae</taxon>
        <taxon>Ailuropoda</taxon>
    </lineage>
</organism>
<dbReference type="EMBL" id="AY327449">
    <property type="protein sequence ID" value="AAQ93320.1"/>
    <property type="molecule type" value="mRNA"/>
</dbReference>
<dbReference type="RefSeq" id="NP_001291815.1">
    <property type="nucleotide sequence ID" value="NM_001304886.1"/>
</dbReference>
<dbReference type="SMR" id="Q6EH52"/>
<dbReference type="FunCoup" id="Q6EH52">
    <property type="interactions" value="9"/>
</dbReference>
<dbReference type="GlyCosmos" id="Q6EH52">
    <property type="glycosylation" value="2 sites, No reported glycans"/>
</dbReference>
<dbReference type="GeneID" id="100499575"/>
<dbReference type="InParanoid" id="Q6EH52"/>
<dbReference type="Proteomes" id="UP000008912">
    <property type="component" value="Unassembled WGS sequence"/>
</dbReference>
<dbReference type="GO" id="GO:0005794">
    <property type="term" value="C:Golgi apparatus"/>
    <property type="evidence" value="ECO:0007669"/>
    <property type="project" value="UniProtKB-SubCell"/>
</dbReference>
<dbReference type="GO" id="GO:0005886">
    <property type="term" value="C:plasma membrane"/>
    <property type="evidence" value="ECO:0007669"/>
    <property type="project" value="UniProtKB-SubCell"/>
</dbReference>
<dbReference type="GO" id="GO:0098552">
    <property type="term" value="C:side of membrane"/>
    <property type="evidence" value="ECO:0007669"/>
    <property type="project" value="UniProtKB-KW"/>
</dbReference>
<dbReference type="GO" id="GO:0005507">
    <property type="term" value="F:copper ion binding"/>
    <property type="evidence" value="ECO:0000250"/>
    <property type="project" value="UniProtKB"/>
</dbReference>
<dbReference type="GO" id="GO:0051260">
    <property type="term" value="P:protein homooligomerization"/>
    <property type="evidence" value="ECO:0007669"/>
    <property type="project" value="InterPro"/>
</dbReference>
<dbReference type="FunFam" id="1.10.790.10:FF:000001">
    <property type="entry name" value="Major prion protein"/>
    <property type="match status" value="1"/>
</dbReference>
<dbReference type="Gene3D" id="1.10.790.10">
    <property type="entry name" value="Prion/Doppel protein, beta-ribbon domain"/>
    <property type="match status" value="1"/>
</dbReference>
<dbReference type="InterPro" id="IPR000817">
    <property type="entry name" value="Prion"/>
</dbReference>
<dbReference type="InterPro" id="IPR036924">
    <property type="entry name" value="Prion/Doppel_b-ribbon_dom_sf"/>
</dbReference>
<dbReference type="InterPro" id="IPR022416">
    <property type="entry name" value="Prion/Doppel_prot_b-ribbon_dom"/>
</dbReference>
<dbReference type="InterPro" id="IPR020949">
    <property type="entry name" value="Prion_copper_b_octapeptide"/>
</dbReference>
<dbReference type="InterPro" id="IPR025860">
    <property type="entry name" value="Prion_N"/>
</dbReference>
<dbReference type="PANTHER" id="PTHR15506">
    <property type="entry name" value="DOPPEL PRION"/>
    <property type="match status" value="1"/>
</dbReference>
<dbReference type="PANTHER" id="PTHR15506:SF2">
    <property type="entry name" value="MAJOR PRION PROTEIN"/>
    <property type="match status" value="1"/>
</dbReference>
<dbReference type="Pfam" id="PF00377">
    <property type="entry name" value="Prion"/>
    <property type="match status" value="1"/>
</dbReference>
<dbReference type="Pfam" id="PF11587">
    <property type="entry name" value="Prion_bPrPp"/>
    <property type="match status" value="1"/>
</dbReference>
<dbReference type="Pfam" id="PF03991">
    <property type="entry name" value="Prion_octapep"/>
    <property type="match status" value="2"/>
</dbReference>
<dbReference type="PRINTS" id="PR00341">
    <property type="entry name" value="PRION"/>
</dbReference>
<dbReference type="SMART" id="SM00157">
    <property type="entry name" value="PRP"/>
    <property type="match status" value="1"/>
</dbReference>
<dbReference type="SUPFAM" id="SSF54098">
    <property type="entry name" value="Prion-like"/>
    <property type="match status" value="1"/>
</dbReference>
<dbReference type="PROSITE" id="PS00291">
    <property type="entry name" value="PRION_1"/>
    <property type="match status" value="1"/>
</dbReference>
<dbReference type="PROSITE" id="PS00706">
    <property type="entry name" value="PRION_2"/>
    <property type="match status" value="1"/>
</dbReference>
<accession>Q6EH52</accession>
<evidence type="ECO:0000250" key="1"/>
<evidence type="ECO:0000250" key="2">
    <source>
        <dbReference type="UniProtKB" id="P04156"/>
    </source>
</evidence>
<evidence type="ECO:0000250" key="3">
    <source>
        <dbReference type="UniProtKB" id="P04273"/>
    </source>
</evidence>
<evidence type="ECO:0000250" key="4">
    <source>
        <dbReference type="UniProtKB" id="P04925"/>
    </source>
</evidence>
<evidence type="ECO:0000255" key="5"/>
<evidence type="ECO:0000256" key="6">
    <source>
        <dbReference type="SAM" id="MobiDB-lite"/>
    </source>
</evidence>
<evidence type="ECO:0000305" key="7"/>
<sequence>MVKSHIGSWILVLFVAMWSDVGLCKKRPKPGGGWNTGGSRYPGPGSPGGNRYPPQGGGGWGQPHGGGWGQPHGGGWGQPHGGGWGQPHGGGWGQPHGGGGWGQGGTHGQWNKPSKPKTNMKHVAGAAAAGAVVGGLGGYMLGSAMSRPLIHFGSDYEDRYYRENMHRYPNQVYYRPVDQYSNQNNFVHDCVNITVKEHTVTTTTKGENFTETDIKMMERVVEQMCITQYQRESQAYYQRGASVILFSSPPVILLISFLIFLIVG</sequence>
<proteinExistence type="evidence at transcript level"/>
<feature type="signal peptide" evidence="1">
    <location>
        <begin position="1"/>
        <end position="24"/>
    </location>
</feature>
<feature type="chain" id="PRO_0000042898" description="Major prion protein">
    <location>
        <begin position="25"/>
        <end position="241"/>
    </location>
</feature>
<feature type="propeptide" id="PRO_0000042899" description="Removed in mature form" evidence="5">
    <location>
        <begin position="242"/>
        <end position="264"/>
    </location>
</feature>
<feature type="repeat" description="1">
    <location>
        <begin position="54"/>
        <end position="62"/>
    </location>
</feature>
<feature type="repeat" description="2">
    <location>
        <begin position="63"/>
        <end position="70"/>
    </location>
</feature>
<feature type="repeat" description="3">
    <location>
        <begin position="71"/>
        <end position="78"/>
    </location>
</feature>
<feature type="repeat" description="4">
    <location>
        <begin position="79"/>
        <end position="86"/>
    </location>
</feature>
<feature type="repeat" description="5">
    <location>
        <begin position="87"/>
        <end position="94"/>
    </location>
</feature>
<feature type="repeat" description="6">
    <location>
        <begin position="95"/>
        <end position="103"/>
    </location>
</feature>
<feature type="region of interest" description="Interaction with GRB2, ERI3 and SYN1" evidence="4">
    <location>
        <begin position="25"/>
        <end position="241"/>
    </location>
</feature>
<feature type="region of interest" description="Disordered" evidence="6">
    <location>
        <begin position="28"/>
        <end position="118"/>
    </location>
</feature>
<feature type="region of interest" description="6 X 8 AA tandem repeats of P-H-G-G-G-W-G-Q">
    <location>
        <begin position="54"/>
        <end position="103"/>
    </location>
</feature>
<feature type="compositionally biased region" description="Low complexity" evidence="6">
    <location>
        <begin position="37"/>
        <end position="54"/>
    </location>
</feature>
<feature type="compositionally biased region" description="Gly residues" evidence="6">
    <location>
        <begin position="55"/>
        <end position="107"/>
    </location>
</feature>
<feature type="binding site" evidence="2">
    <location>
        <position position="72"/>
    </location>
    <ligand>
        <name>Cu(2+)</name>
        <dbReference type="ChEBI" id="CHEBI:29036"/>
        <label>1</label>
    </ligand>
</feature>
<feature type="binding site" evidence="2">
    <location>
        <position position="73"/>
    </location>
    <ligand>
        <name>Cu(2+)</name>
        <dbReference type="ChEBI" id="CHEBI:29036"/>
        <label>1</label>
    </ligand>
</feature>
<feature type="binding site" evidence="2">
    <location>
        <position position="74"/>
    </location>
    <ligand>
        <name>Cu(2+)</name>
        <dbReference type="ChEBI" id="CHEBI:29036"/>
        <label>1</label>
    </ligand>
</feature>
<feature type="binding site" evidence="2">
    <location>
        <position position="80"/>
    </location>
    <ligand>
        <name>Cu(2+)</name>
        <dbReference type="ChEBI" id="CHEBI:29036"/>
        <label>2</label>
    </ligand>
</feature>
<feature type="binding site" evidence="2">
    <location>
        <position position="81"/>
    </location>
    <ligand>
        <name>Cu(2+)</name>
        <dbReference type="ChEBI" id="CHEBI:29036"/>
        <label>2</label>
    </ligand>
</feature>
<feature type="binding site" evidence="2">
    <location>
        <position position="82"/>
    </location>
    <ligand>
        <name>Cu(2+)</name>
        <dbReference type="ChEBI" id="CHEBI:29036"/>
        <label>2</label>
    </ligand>
</feature>
<feature type="binding site" evidence="2">
    <location>
        <position position="88"/>
    </location>
    <ligand>
        <name>Cu(2+)</name>
        <dbReference type="ChEBI" id="CHEBI:29036"/>
        <label>3</label>
    </ligand>
</feature>
<feature type="binding site" evidence="2">
    <location>
        <position position="89"/>
    </location>
    <ligand>
        <name>Cu(2+)</name>
        <dbReference type="ChEBI" id="CHEBI:29036"/>
        <label>3</label>
    </ligand>
</feature>
<feature type="binding site" evidence="2">
    <location>
        <position position="90"/>
    </location>
    <ligand>
        <name>Cu(2+)</name>
        <dbReference type="ChEBI" id="CHEBI:29036"/>
        <label>3</label>
    </ligand>
</feature>
<feature type="binding site" evidence="2">
    <location>
        <position position="96"/>
    </location>
    <ligand>
        <name>Cu(2+)</name>
        <dbReference type="ChEBI" id="CHEBI:29036"/>
        <label>4</label>
    </ligand>
</feature>
<feature type="binding site" evidence="2">
    <location>
        <position position="98"/>
    </location>
    <ligand>
        <name>Cu(2+)</name>
        <dbReference type="ChEBI" id="CHEBI:29036"/>
        <label>4</label>
    </ligand>
</feature>
<feature type="lipid moiety-binding region" description="GPI-anchor amidated alanine" evidence="5">
    <location>
        <position position="241"/>
    </location>
</feature>
<feature type="glycosylation site" description="N-linked (GlcNAc...) asparagine" evidence="5">
    <location>
        <position position="192"/>
    </location>
</feature>
<feature type="glycosylation site" description="N-linked (GlcNAc...) asparagine" evidence="5">
    <location>
        <position position="208"/>
    </location>
</feature>
<feature type="disulfide bond" evidence="3">
    <location>
        <begin position="190"/>
        <end position="225"/>
    </location>
</feature>
<protein>
    <recommendedName>
        <fullName>Major prion protein</fullName>
        <shortName>PrP</shortName>
    </recommendedName>
    <cdAntigenName>CD230</cdAntigenName>
</protein>
<gene>
    <name type="primary">PRNP</name>
    <name type="synonym">PRP</name>
</gene>
<reference key="1">
    <citation type="submission" date="2003-06" db="EMBL/GenBank/DDBJ databases">
        <title>Molecular cloning of prion genes in giant panda.</title>
        <authorList>
            <person name="Yang J."/>
            <person name="Zhao D."/>
            <person name="Li N."/>
        </authorList>
    </citation>
    <scope>NUCLEOTIDE SEQUENCE [MRNA]</scope>
</reference>